<proteinExistence type="evidence at transcript level"/>
<accession>Q5ZAY9</accession>
<accession>A0A0P0V8U9</accession>
<feature type="signal peptide" evidence="6">
    <location>
        <begin position="1"/>
        <end position="20"/>
    </location>
</feature>
<feature type="chain" id="PRO_0000394208" description="Cytokinin dehydrogenase 5">
    <location>
        <begin position="21"/>
        <end position="534"/>
    </location>
</feature>
<feature type="domain" description="FAD-binding PCMH-type" evidence="7">
    <location>
        <begin position="59"/>
        <end position="243"/>
    </location>
</feature>
<feature type="binding site" evidence="4">
    <location>
        <position position="93"/>
    </location>
    <ligand>
        <name>FAD</name>
        <dbReference type="ChEBI" id="CHEBI:57692"/>
    </ligand>
</feature>
<feature type="binding site" evidence="5">
    <location>
        <position position="95"/>
    </location>
    <ligand>
        <name>FAD</name>
        <dbReference type="ChEBI" id="CHEBI:57692"/>
    </ligand>
</feature>
<feature type="binding site" evidence="5">
    <location>
        <position position="97"/>
    </location>
    <ligand>
        <name>FAD</name>
        <dbReference type="ChEBI" id="CHEBI:57692"/>
    </ligand>
</feature>
<feature type="binding site" evidence="5">
    <location>
        <position position="99"/>
    </location>
    <ligand>
        <name>FAD</name>
        <dbReference type="ChEBI" id="CHEBI:57692"/>
    </ligand>
</feature>
<feature type="binding site" evidence="5">
    <location>
        <position position="103"/>
    </location>
    <ligand>
        <name>FAD</name>
        <dbReference type="ChEBI" id="CHEBI:57692"/>
    </ligand>
</feature>
<feature type="binding site" evidence="5">
    <location>
        <position position="167"/>
    </location>
    <ligand>
        <name>FAD</name>
        <dbReference type="ChEBI" id="CHEBI:57692"/>
    </ligand>
</feature>
<feature type="binding site" evidence="5">
    <location>
        <position position="172"/>
    </location>
    <ligand>
        <name>FAD</name>
        <dbReference type="ChEBI" id="CHEBI:57692"/>
    </ligand>
</feature>
<feature type="binding site" evidence="5">
    <location>
        <position position="178"/>
    </location>
    <ligand>
        <name>FAD</name>
        <dbReference type="ChEBI" id="CHEBI:57692"/>
    </ligand>
</feature>
<feature type="binding site" evidence="5">
    <location>
        <position position="182"/>
    </location>
    <ligand>
        <name>FAD</name>
        <dbReference type="ChEBI" id="CHEBI:57692"/>
    </ligand>
</feature>
<feature type="binding site" evidence="5">
    <location>
        <position position="233"/>
    </location>
    <ligand>
        <name>FAD</name>
        <dbReference type="ChEBI" id="CHEBI:57692"/>
    </ligand>
</feature>
<feature type="binding site" evidence="5">
    <location>
        <position position="484"/>
    </location>
    <ligand>
        <name>FAD</name>
        <dbReference type="ChEBI" id="CHEBI:57692"/>
    </ligand>
</feature>
<feature type="binding site" evidence="5">
    <location>
        <position position="522"/>
    </location>
    <ligand>
        <name>FAD</name>
        <dbReference type="ChEBI" id="CHEBI:57692"/>
    </ligand>
</feature>
<feature type="modified residue" description="Pros-8alpha-FAD histidine" evidence="5">
    <location>
        <position position="98"/>
    </location>
</feature>
<feature type="glycosylation site" description="N-linked (GlcNAc...) asparagine" evidence="6">
    <location>
        <position position="152"/>
    </location>
</feature>
<feature type="glycosylation site" description="N-linked (GlcNAc...) asparagine" evidence="6">
    <location>
        <position position="256"/>
    </location>
</feature>
<feature type="sequence conflict" description="In Ref. 5; AK101022." evidence="9" ref="5">
    <original>A</original>
    <variation>E</variation>
    <location>
        <position position="156"/>
    </location>
</feature>
<feature type="sequence conflict" description="In Ref. 5; AK101022." evidence="9" ref="5">
    <original>H</original>
    <variation>N</variation>
    <location>
        <position position="313"/>
    </location>
</feature>
<organism>
    <name type="scientific">Oryza sativa subsp. japonica</name>
    <name type="common">Rice</name>
    <dbReference type="NCBI Taxonomy" id="39947"/>
    <lineage>
        <taxon>Eukaryota</taxon>
        <taxon>Viridiplantae</taxon>
        <taxon>Streptophyta</taxon>
        <taxon>Embryophyta</taxon>
        <taxon>Tracheophyta</taxon>
        <taxon>Spermatophyta</taxon>
        <taxon>Magnoliopsida</taxon>
        <taxon>Liliopsida</taxon>
        <taxon>Poales</taxon>
        <taxon>Poaceae</taxon>
        <taxon>BOP clade</taxon>
        <taxon>Oryzoideae</taxon>
        <taxon>Oryzeae</taxon>
        <taxon>Oryzinae</taxon>
        <taxon>Oryza</taxon>
        <taxon>Oryza sativa</taxon>
    </lineage>
</organism>
<dbReference type="EC" id="1.5.99.12" evidence="3"/>
<dbReference type="EMBL" id="AP003265">
    <property type="protein sequence ID" value="BAD52957.1"/>
    <property type="molecule type" value="Genomic_DNA"/>
</dbReference>
<dbReference type="EMBL" id="AP003344">
    <property type="protein sequence ID" value="BAD53232.1"/>
    <property type="molecule type" value="Genomic_DNA"/>
</dbReference>
<dbReference type="EMBL" id="AP008207">
    <property type="protein sequence ID" value="BAF06323.1"/>
    <property type="molecule type" value="Genomic_DNA"/>
</dbReference>
<dbReference type="EMBL" id="AP014957">
    <property type="protein sequence ID" value="BAS74596.1"/>
    <property type="molecule type" value="Genomic_DNA"/>
</dbReference>
<dbReference type="EMBL" id="AK101022">
    <property type="status" value="NOT_ANNOTATED_CDS"/>
    <property type="molecule type" value="mRNA"/>
</dbReference>
<dbReference type="RefSeq" id="XP_015625924.1">
    <property type="nucleotide sequence ID" value="XM_015770438.1"/>
</dbReference>
<dbReference type="SMR" id="Q5ZAY9"/>
<dbReference type="FunCoup" id="Q5ZAY9">
    <property type="interactions" value="23"/>
</dbReference>
<dbReference type="STRING" id="39947.Q5ZAY9"/>
<dbReference type="GlyCosmos" id="Q5ZAY9">
    <property type="glycosylation" value="2 sites, No reported glycans"/>
</dbReference>
<dbReference type="PaxDb" id="39947-Q5ZAY9"/>
<dbReference type="EnsemblPlants" id="Os01t0775400-01">
    <property type="protein sequence ID" value="Os01t0775400-01"/>
    <property type="gene ID" value="Os01g0775400"/>
</dbReference>
<dbReference type="Gramene" id="Os01t0775400-01">
    <property type="protein sequence ID" value="Os01t0775400-01"/>
    <property type="gene ID" value="Os01g0775400"/>
</dbReference>
<dbReference type="KEGG" id="dosa:Os01g0775400"/>
<dbReference type="eggNOG" id="KOG1231">
    <property type="taxonomic scope" value="Eukaryota"/>
</dbReference>
<dbReference type="HOGENOM" id="CLU_024955_1_0_1"/>
<dbReference type="InParanoid" id="Q5ZAY9"/>
<dbReference type="OMA" id="PMNKSKW"/>
<dbReference type="OrthoDB" id="415825at2759"/>
<dbReference type="Proteomes" id="UP000000763">
    <property type="component" value="Chromosome 1"/>
</dbReference>
<dbReference type="Proteomes" id="UP000059680">
    <property type="component" value="Chromosome 1"/>
</dbReference>
<dbReference type="GO" id="GO:0005576">
    <property type="term" value="C:extracellular region"/>
    <property type="evidence" value="ECO:0007669"/>
    <property type="project" value="UniProtKB-SubCell"/>
</dbReference>
<dbReference type="GO" id="GO:0019139">
    <property type="term" value="F:cytokinin dehydrogenase activity"/>
    <property type="evidence" value="ECO:0000305"/>
    <property type="project" value="Gramene"/>
</dbReference>
<dbReference type="GO" id="GO:0071949">
    <property type="term" value="F:FAD binding"/>
    <property type="evidence" value="ECO:0007669"/>
    <property type="project" value="InterPro"/>
</dbReference>
<dbReference type="GO" id="GO:0016491">
    <property type="term" value="F:oxidoreductase activity"/>
    <property type="evidence" value="ECO:0000318"/>
    <property type="project" value="GO_Central"/>
</dbReference>
<dbReference type="GO" id="GO:0009690">
    <property type="term" value="P:cytokinin metabolic process"/>
    <property type="evidence" value="ECO:0007669"/>
    <property type="project" value="InterPro"/>
</dbReference>
<dbReference type="FunFam" id="3.40.462.10:FF:000001">
    <property type="entry name" value="Cytokinin dehydrogenase 2"/>
    <property type="match status" value="1"/>
</dbReference>
<dbReference type="Gene3D" id="3.30.465.10">
    <property type="match status" value="1"/>
</dbReference>
<dbReference type="Gene3D" id="3.40.462.10">
    <property type="entry name" value="FAD-linked oxidases, C-terminal domain"/>
    <property type="match status" value="1"/>
</dbReference>
<dbReference type="Gene3D" id="3.30.43.10">
    <property type="entry name" value="Uridine Diphospho-n-acetylenolpyruvylglucosamine Reductase, domain 2"/>
    <property type="match status" value="1"/>
</dbReference>
<dbReference type="InterPro" id="IPR016170">
    <property type="entry name" value="Cytok_DH_C_sf"/>
</dbReference>
<dbReference type="InterPro" id="IPR015345">
    <property type="entry name" value="Cytokinin_DH_FAD/cytokin-bd"/>
</dbReference>
<dbReference type="InterPro" id="IPR016166">
    <property type="entry name" value="FAD-bd_PCMH"/>
</dbReference>
<dbReference type="InterPro" id="IPR036318">
    <property type="entry name" value="FAD-bd_PCMH-like_sf"/>
</dbReference>
<dbReference type="InterPro" id="IPR016167">
    <property type="entry name" value="FAD-bd_PCMH_sub1"/>
</dbReference>
<dbReference type="InterPro" id="IPR016169">
    <property type="entry name" value="FAD-bd_PCMH_sub2"/>
</dbReference>
<dbReference type="InterPro" id="IPR016164">
    <property type="entry name" value="FAD-linked_Oxase-like_C"/>
</dbReference>
<dbReference type="InterPro" id="IPR050432">
    <property type="entry name" value="FAD-linked_Oxidoreductases_BP"/>
</dbReference>
<dbReference type="InterPro" id="IPR006094">
    <property type="entry name" value="Oxid_FAD_bind_N"/>
</dbReference>
<dbReference type="InterPro" id="IPR006093">
    <property type="entry name" value="Oxy_OxRdtase_FAD_BS"/>
</dbReference>
<dbReference type="PANTHER" id="PTHR13878:SF102">
    <property type="entry name" value="CYTOKININ DEHYDROGENASE 5"/>
    <property type="match status" value="1"/>
</dbReference>
<dbReference type="PANTHER" id="PTHR13878">
    <property type="entry name" value="GULONOLACTONE OXIDASE"/>
    <property type="match status" value="1"/>
</dbReference>
<dbReference type="Pfam" id="PF09265">
    <property type="entry name" value="Cytokin-bind"/>
    <property type="match status" value="1"/>
</dbReference>
<dbReference type="Pfam" id="PF01565">
    <property type="entry name" value="FAD_binding_4"/>
    <property type="match status" value="1"/>
</dbReference>
<dbReference type="SUPFAM" id="SSF56176">
    <property type="entry name" value="FAD-binding/transporter-associated domain-like"/>
    <property type="match status" value="1"/>
</dbReference>
<dbReference type="SUPFAM" id="SSF55103">
    <property type="entry name" value="FAD-linked oxidases, C-terminal domain"/>
    <property type="match status" value="1"/>
</dbReference>
<dbReference type="PROSITE" id="PS51387">
    <property type="entry name" value="FAD_PCMH"/>
    <property type="match status" value="1"/>
</dbReference>
<dbReference type="PROSITE" id="PS00862">
    <property type="entry name" value="OX2_COVAL_FAD"/>
    <property type="match status" value="1"/>
</dbReference>
<evidence type="ECO:0000250" key="1"/>
<evidence type="ECO:0000250" key="2">
    <source>
        <dbReference type="UniProtKB" id="Q6Z955"/>
    </source>
</evidence>
<evidence type="ECO:0000250" key="3">
    <source>
        <dbReference type="UniProtKB" id="Q8LNV6"/>
    </source>
</evidence>
<evidence type="ECO:0000250" key="4">
    <source>
        <dbReference type="UniProtKB" id="Q9FUJ1"/>
    </source>
</evidence>
<evidence type="ECO:0000250" key="5">
    <source>
        <dbReference type="UniProtKB" id="Q9T0N8"/>
    </source>
</evidence>
<evidence type="ECO:0000255" key="6"/>
<evidence type="ECO:0000255" key="7">
    <source>
        <dbReference type="PROSITE-ProRule" id="PRU00718"/>
    </source>
</evidence>
<evidence type="ECO:0000269" key="8">
    <source>
    </source>
</evidence>
<evidence type="ECO:0000305" key="9"/>
<reference key="1">
    <citation type="journal article" date="2002" name="Nature">
        <title>The genome sequence and structure of rice chromosome 1.</title>
        <authorList>
            <person name="Sasaki T."/>
            <person name="Matsumoto T."/>
            <person name="Yamamoto K."/>
            <person name="Sakata K."/>
            <person name="Baba T."/>
            <person name="Katayose Y."/>
            <person name="Wu J."/>
            <person name="Niimura Y."/>
            <person name="Cheng Z."/>
            <person name="Nagamura Y."/>
            <person name="Antonio B.A."/>
            <person name="Kanamori H."/>
            <person name="Hosokawa S."/>
            <person name="Masukawa M."/>
            <person name="Arikawa K."/>
            <person name="Chiden Y."/>
            <person name="Hayashi M."/>
            <person name="Okamoto M."/>
            <person name="Ando T."/>
            <person name="Aoki H."/>
            <person name="Arita K."/>
            <person name="Hamada M."/>
            <person name="Harada C."/>
            <person name="Hijishita S."/>
            <person name="Honda M."/>
            <person name="Ichikawa Y."/>
            <person name="Idonuma A."/>
            <person name="Iijima M."/>
            <person name="Ikeda M."/>
            <person name="Ikeno M."/>
            <person name="Ito S."/>
            <person name="Ito T."/>
            <person name="Ito Y."/>
            <person name="Ito Y."/>
            <person name="Iwabuchi A."/>
            <person name="Kamiya K."/>
            <person name="Karasawa W."/>
            <person name="Katagiri S."/>
            <person name="Kikuta A."/>
            <person name="Kobayashi N."/>
            <person name="Kono I."/>
            <person name="Machita K."/>
            <person name="Maehara T."/>
            <person name="Mizuno H."/>
            <person name="Mizubayashi T."/>
            <person name="Mukai Y."/>
            <person name="Nagasaki H."/>
            <person name="Nakashima M."/>
            <person name="Nakama Y."/>
            <person name="Nakamichi Y."/>
            <person name="Nakamura M."/>
            <person name="Namiki N."/>
            <person name="Negishi M."/>
            <person name="Ohta I."/>
            <person name="Ono N."/>
            <person name="Saji S."/>
            <person name="Sakai K."/>
            <person name="Shibata M."/>
            <person name="Shimokawa T."/>
            <person name="Shomura A."/>
            <person name="Song J."/>
            <person name="Takazaki Y."/>
            <person name="Terasawa K."/>
            <person name="Tsuji K."/>
            <person name="Waki K."/>
            <person name="Yamagata H."/>
            <person name="Yamane H."/>
            <person name="Yoshiki S."/>
            <person name="Yoshihara R."/>
            <person name="Yukawa K."/>
            <person name="Zhong H."/>
            <person name="Iwama H."/>
            <person name="Endo T."/>
            <person name="Ito H."/>
            <person name="Hahn J.H."/>
            <person name="Kim H.-I."/>
            <person name="Eun M.-Y."/>
            <person name="Yano M."/>
            <person name="Jiang J."/>
            <person name="Gojobori T."/>
        </authorList>
    </citation>
    <scope>NUCLEOTIDE SEQUENCE [LARGE SCALE GENOMIC DNA]</scope>
    <source>
        <strain>cv. Nipponbare</strain>
    </source>
</reference>
<reference key="2">
    <citation type="journal article" date="2005" name="Nature">
        <title>The map-based sequence of the rice genome.</title>
        <authorList>
            <consortium name="International rice genome sequencing project (IRGSP)"/>
        </authorList>
    </citation>
    <scope>NUCLEOTIDE SEQUENCE [LARGE SCALE GENOMIC DNA]</scope>
    <source>
        <strain>cv. Nipponbare</strain>
    </source>
</reference>
<reference key="3">
    <citation type="journal article" date="2008" name="Nucleic Acids Res.">
        <title>The rice annotation project database (RAP-DB): 2008 update.</title>
        <authorList>
            <consortium name="The rice annotation project (RAP)"/>
        </authorList>
    </citation>
    <scope>GENOME REANNOTATION</scope>
    <source>
        <strain>cv. Nipponbare</strain>
    </source>
</reference>
<reference key="4">
    <citation type="journal article" date="2013" name="Rice">
        <title>Improvement of the Oryza sativa Nipponbare reference genome using next generation sequence and optical map data.</title>
        <authorList>
            <person name="Kawahara Y."/>
            <person name="de la Bastide M."/>
            <person name="Hamilton J.P."/>
            <person name="Kanamori H."/>
            <person name="McCombie W.R."/>
            <person name="Ouyang S."/>
            <person name="Schwartz D.C."/>
            <person name="Tanaka T."/>
            <person name="Wu J."/>
            <person name="Zhou S."/>
            <person name="Childs K.L."/>
            <person name="Davidson R.M."/>
            <person name="Lin H."/>
            <person name="Quesada-Ocampo L."/>
            <person name="Vaillancourt B."/>
            <person name="Sakai H."/>
            <person name="Lee S.S."/>
            <person name="Kim J."/>
            <person name="Numa H."/>
            <person name="Itoh T."/>
            <person name="Buell C.R."/>
            <person name="Matsumoto T."/>
        </authorList>
    </citation>
    <scope>GENOME REANNOTATION</scope>
    <source>
        <strain>cv. Nipponbare</strain>
    </source>
</reference>
<reference key="5">
    <citation type="journal article" date="2003" name="Science">
        <title>Collection, mapping, and annotation of over 28,000 cDNA clones from japonica rice.</title>
        <authorList>
            <consortium name="The rice full-length cDNA consortium"/>
        </authorList>
    </citation>
    <scope>NUCLEOTIDE SEQUENCE [LARGE SCALE MRNA]</scope>
    <source>
        <strain>cv. Nipponbare</strain>
    </source>
</reference>
<reference key="6">
    <citation type="journal article" date="2003" name="J. Plant Res.">
        <title>Structure and function of cytokinin oxidase/dehydrogenase genes of maize, rice, Arabidopsis and other species.</title>
        <authorList>
            <person name="Schmuelling T."/>
            <person name="Werner T."/>
            <person name="Riefler M."/>
            <person name="Krupkova E."/>
            <person name="Bartrina y Manns I."/>
        </authorList>
    </citation>
    <scope>REVIEW</scope>
</reference>
<reference key="7">
    <citation type="journal article" date="2005" name="Science">
        <title>Cytokinin oxidase regulates rice grain production.</title>
        <authorList>
            <person name="Ashikari M."/>
            <person name="Sakakibara H."/>
            <person name="Lin S."/>
            <person name="Yamamoto T."/>
            <person name="Takashi T."/>
            <person name="Nishimura A."/>
            <person name="Angeles E.R."/>
            <person name="Qian Q."/>
            <person name="Kitano H."/>
            <person name="Matsuoka M."/>
        </authorList>
    </citation>
    <scope>TISSUE SPECIFICITY</scope>
    <scope>GENE FAMILY</scope>
    <scope>NOMENCLATURE</scope>
    <source>
        <strain>cv. Koshihikari</strain>
    </source>
</reference>
<comment type="function">
    <text evidence="2">Catalyzes the oxidation of cytokinins, a family of N(6)-substituted adenine derivatives that are plant hormones, where the substituent is an isopentenyl group.</text>
</comment>
<comment type="catalytic activity">
    <reaction evidence="3">
        <text>N(6)-dimethylallyladenine + A + H2O = 3-methyl-2-butenal + adenine + AH2</text>
        <dbReference type="Rhea" id="RHEA:13625"/>
        <dbReference type="ChEBI" id="CHEBI:13193"/>
        <dbReference type="ChEBI" id="CHEBI:15377"/>
        <dbReference type="ChEBI" id="CHEBI:15825"/>
        <dbReference type="ChEBI" id="CHEBI:16708"/>
        <dbReference type="ChEBI" id="CHEBI:17499"/>
        <dbReference type="ChEBI" id="CHEBI:17660"/>
        <dbReference type="EC" id="1.5.99.12"/>
    </reaction>
</comment>
<comment type="cofactor">
    <cofactor evidence="3">
        <name>FAD</name>
        <dbReference type="ChEBI" id="CHEBI:57692"/>
    </cofactor>
</comment>
<comment type="subunit">
    <text evidence="1">Monomer.</text>
</comment>
<comment type="subcellular location">
    <subcellularLocation>
        <location evidence="1">Secreted</location>
        <location evidence="1">Extracellular space</location>
    </subcellularLocation>
</comment>
<comment type="tissue specificity">
    <text evidence="8">Expressed in inflorescence meristems.</text>
</comment>
<comment type="similarity">
    <text evidence="9">Belongs to the oxygen-dependent FAD-linked oxidoreductase family.</text>
</comment>
<sequence length="534" mass="58202">MAWCLVFMVFLIYCLISTVGLPVAPADEAAMQLGGVGGGRLSVEPSDVMEASLDFGRLTSAEPLAVFHPRGAGDVAALVKAAYGSASGIRVSARGHGHSISGQAQAAGGVVVDMSHGWRAEAAERTLPVYSPALGGHYIDVWGGELWIDVLNWTLAHGGLAPRSWTDYLYLSVGGTLSNAGISGQAFHHGPQISNVYELDVVTGKGEVVTCSESNNPDLFFGALGGLGQLGIITRARIALEPAPHRVRWIRALYSNFTEFTADQERLISLQHGGRRFDYVEGFVVAAEGLINNWRSSFFSPQNPVKLSSLKHHSGVLYCLEVTKNYDDSTAVTVDQDVEALLGELNFIPGTVFTTDLPYVDFLDRVHKAELKLRGKGMWEVPHPWLNLFVPASRIADFDRGVFRGVLGSRTAGGPILIYPMNRHKWDPRSSVVTPEEDVFYLVAFLRSAVPGSTDPAQSLEALERQNREILEFCDEAGIGAKQYLPNHKAQREWEAHFGARWARFARLKAEFDPRAMLATGQGIFDSPPLLAES</sequence>
<protein>
    <recommendedName>
        <fullName>Cytokinin dehydrogenase 5</fullName>
        <ecNumber evidence="3">1.5.99.12</ecNumber>
    </recommendedName>
    <alternativeName>
        <fullName>Cytokinin oxidase 5</fullName>
        <shortName>OsCKX5</shortName>
    </alternativeName>
</protein>
<keyword id="KW-0274">FAD</keyword>
<keyword id="KW-0285">Flavoprotein</keyword>
<keyword id="KW-0325">Glycoprotein</keyword>
<keyword id="KW-0560">Oxidoreductase</keyword>
<keyword id="KW-1185">Reference proteome</keyword>
<keyword id="KW-0964">Secreted</keyword>
<keyword id="KW-0732">Signal</keyword>
<gene>
    <name type="primary">CKX5</name>
    <name type="ordered locus">Os01g0775400</name>
    <name type="ordered locus">LOC_Os01g56810</name>
    <name type="ORF">P0413G02.1</name>
    <name type="ORF">P0490D09.33</name>
</gene>
<name>CKX5_ORYSJ</name>